<proteinExistence type="inferred from homology"/>
<evidence type="ECO:0000250" key="1"/>
<evidence type="ECO:0000255" key="2"/>
<reference key="1">
    <citation type="journal article" date="1983" name="Proc. Natl. Acad. Sci. U.S.A.">
        <title>Nucleotide sequence of the simian sarcoma virus genome: demonstration that its acquired cellular sequences encode the transforming gene product p28sis.</title>
        <authorList>
            <person name="Devare S.G."/>
            <person name="Reddy E.P."/>
            <person name="Law J.D."/>
            <person name="Robbins K.C."/>
            <person name="Aaronson S.A."/>
        </authorList>
    </citation>
    <scope>NUCLEOTIDE SEQUENCE [GENOMIC DNA]</scope>
</reference>
<comment type="function">
    <text evidence="1">The surface protein (SU) attaches the virus to the host cell by binding to its receptor. This interaction triggers the refolding of the transmembrane protein (TM) and is thought to activate its fusogenic potential by unmasking its fusion peptide. Fusion occurs at the host cell plasma membrane (By similarity).</text>
</comment>
<comment type="function">
    <text evidence="1">The transmembrane protein (TM) acts as a class I viral fusion protein. Under the current model, the protein has at least 3 conformational states: pre-fusion native state, pre-hairpin intermediate state, and post-fusion hairpin state. During viral and target cell membrane fusion, the coiled coil regions (heptad repeats) assume a trimer-of-hairpins structure, positioning the fusion peptide in close proximity to the C-terminal region of the ectodomain. The formation of this structure appears to drive apposition and subsequent fusion of viral and target cell membranes. Membranes fusion leads to delivery of the nucleocapsid into the cytoplasm (By similarity).</text>
</comment>
<comment type="subunit">
    <text evidence="1">The mature envelope protein (Env) consists of a trimer of SU-TM heterodimers attached by noncovalent interactions or by a labile interchain disulfide bond.</text>
</comment>
<comment type="subcellular location">
    <molecule>Transmembrane protein</molecule>
    <subcellularLocation>
        <location evidence="1">Virion membrane</location>
        <topology evidence="1">Single-pass type I membrane protein</topology>
    </subcellularLocation>
    <subcellularLocation>
        <location evidence="1">Host cell membrane</location>
        <topology evidence="1">Single-pass type I membrane protein</topology>
    </subcellularLocation>
</comment>
<comment type="subcellular location">
    <molecule>R-peptide</molecule>
    <subcellularLocation>
        <location evidence="1">Host cell membrane</location>
        <topology evidence="1">Peripheral membrane protein</topology>
    </subcellularLocation>
    <text evidence="1">The R-peptide is membrane-associated through its palmitate.</text>
</comment>
<comment type="domain">
    <text evidence="1">The YXXL motif is involved in determining the exact site of viral release at the surface of infected mononuclear cells and promotes endocytosis.</text>
</comment>
<comment type="PTM">
    <text evidence="1">Specific enzymatic cleavages in vivo yield mature proteins. Envelope glycoproteins are synthesized as an inactive precursor that is N-glycosylated and processed likely by host cell furin or by a furin-like protease in the Golgi to yield the mature SU and TM proteins. The cleavage site between SU and TM requires the minimal sequence [KR]-X-[KR]-R. The R-peptide is released from the C-terminus of the cytoplasmic tail of the TM protein upon particle formation as a result of proteolytic cleavage by the viral protease. Cleavage of this peptide is required for TM to become fusogenic (By similarity).</text>
</comment>
<comment type="PTM">
    <text evidence="1">The transmembrane protein is palmitoylated.</text>
</comment>
<comment type="PTM">
    <text evidence="1">The R-peptide is palmitoylated.</text>
</comment>
<protein>
    <recommendedName>
        <fullName>Envelope glycoprotein</fullName>
    </recommendedName>
    <alternativeName>
        <fullName>Env polyprotein</fullName>
    </alternativeName>
    <component>
        <recommendedName>
            <fullName>Transmembrane protein</fullName>
        </recommendedName>
        <alternativeName>
            <fullName>Envelope protein p15E</fullName>
        </alternativeName>
    </component>
    <component>
        <recommendedName>
            <fullName>R-peptide</fullName>
        </recommendedName>
        <alternativeName>
            <fullName>p2E</fullName>
        </alternativeName>
    </component>
</protein>
<name>ENV_WMSV</name>
<organism>
    <name type="scientific">Woolly monkey sarcoma virus</name>
    <name type="common">WMSV</name>
    <name type="synonym">Simian sarcoma-associated virus</name>
    <dbReference type="NCBI Taxonomy" id="11970"/>
    <lineage>
        <taxon>Viruses</taxon>
        <taxon>Riboviria</taxon>
        <taxon>Pararnavirae</taxon>
        <taxon>Artverviricota</taxon>
        <taxon>Revtraviricetes</taxon>
        <taxon>Ortervirales</taxon>
        <taxon>Retroviridae</taxon>
        <taxon>Orthoretrovirinae</taxon>
        <taxon>Gammaretrovirus</taxon>
    </lineage>
</organism>
<sequence>LERQKNQNWYEGWFNSSPWFTTLLSTIAGPLLLLLLLLILGPCIINRLVQFINNRVSAVKILVLRQKYQTLDNEDNL</sequence>
<feature type="chain" id="PRO_0000239601" description="Envelope glycoprotein">
    <location>
        <begin position="1" status="less than"/>
        <end position="77"/>
    </location>
</feature>
<feature type="chain" id="PRO_0000125472" description="Transmembrane protein">
    <location>
        <begin position="1" status="less than"/>
        <end position="62"/>
    </location>
</feature>
<feature type="peptide" id="PRO_0000239602" description="R-peptide" evidence="1">
    <location>
        <begin position="63"/>
        <end position="77"/>
    </location>
</feature>
<feature type="topological domain" description="Extracellular" evidence="2">
    <location>
        <begin position="1" status="less than"/>
        <end position="24"/>
    </location>
</feature>
<feature type="transmembrane region" description="Helical" evidence="2">
    <location>
        <begin position="25"/>
        <end position="45"/>
    </location>
</feature>
<feature type="topological domain" description="Cytoplasmic" evidence="2">
    <location>
        <begin position="46"/>
        <end position="77"/>
    </location>
</feature>
<feature type="short sequence motif" description="YXXL motif; contains endocytosis signal">
    <location>
        <begin position="68"/>
        <end position="71"/>
    </location>
</feature>
<feature type="site" description="Cleavage; by viral protease" evidence="1">
    <location>
        <begin position="61"/>
        <end position="62"/>
    </location>
</feature>
<feature type="lipid moiety-binding region" description="S-palmitoyl cysteine; by host" evidence="1">
    <location>
        <position position="43"/>
    </location>
</feature>
<feature type="non-terminal residue">
    <location>
        <position position="1"/>
    </location>
</feature>
<gene>
    <name type="primary">env</name>
</gene>
<organismHost>
    <name type="scientific">Lagothrix</name>
    <name type="common">woolly monkeys</name>
    <dbReference type="NCBI Taxonomy" id="9518"/>
</organismHost>
<accession>P03384</accession>
<keyword id="KW-0165">Cleavage on pair of basic residues</keyword>
<keyword id="KW-1015">Disulfide bond</keyword>
<keyword id="KW-1169">Fusion of virus membrane with host cell membrane</keyword>
<keyword id="KW-1168">Fusion of virus membrane with host membrane</keyword>
<keyword id="KW-0325">Glycoprotein</keyword>
<keyword id="KW-1032">Host cell membrane</keyword>
<keyword id="KW-1043">Host membrane</keyword>
<keyword id="KW-0945">Host-virus interaction</keyword>
<keyword id="KW-0449">Lipoprotein</keyword>
<keyword id="KW-0472">Membrane</keyword>
<keyword id="KW-0564">Palmitate</keyword>
<keyword id="KW-0812">Transmembrane</keyword>
<keyword id="KW-1133">Transmembrane helix</keyword>
<keyword id="KW-1161">Viral attachment to host cell</keyword>
<keyword id="KW-0261">Viral envelope protein</keyword>
<keyword id="KW-1162">Viral penetration into host cytoplasm</keyword>
<keyword id="KW-0946">Virion</keyword>
<keyword id="KW-1160">Virus entry into host cell</keyword>
<dbReference type="EMBL" id="V01201">
    <property type="protein sequence ID" value="CAA24517.1"/>
    <property type="molecule type" value="Genomic_DNA"/>
</dbReference>
<dbReference type="PIR" id="A03982">
    <property type="entry name" value="A03982"/>
</dbReference>
<dbReference type="RefSeq" id="YP_003580186.1">
    <property type="nucleotide sequence ID" value="NC_009424.4"/>
</dbReference>
<dbReference type="SMR" id="P03384"/>
<dbReference type="Proteomes" id="UP000203831">
    <property type="component" value="Genome"/>
</dbReference>
<dbReference type="GO" id="GO:0020002">
    <property type="term" value="C:host cell plasma membrane"/>
    <property type="evidence" value="ECO:0007669"/>
    <property type="project" value="UniProtKB-SubCell"/>
</dbReference>
<dbReference type="GO" id="GO:0016020">
    <property type="term" value="C:membrane"/>
    <property type="evidence" value="ECO:0007669"/>
    <property type="project" value="UniProtKB-KW"/>
</dbReference>
<dbReference type="GO" id="GO:0019031">
    <property type="term" value="C:viral envelope"/>
    <property type="evidence" value="ECO:0007669"/>
    <property type="project" value="UniProtKB-KW"/>
</dbReference>
<dbReference type="GO" id="GO:0055036">
    <property type="term" value="C:virion membrane"/>
    <property type="evidence" value="ECO:0007669"/>
    <property type="project" value="UniProtKB-SubCell"/>
</dbReference>
<dbReference type="GO" id="GO:0019064">
    <property type="term" value="P:fusion of virus membrane with host plasma membrane"/>
    <property type="evidence" value="ECO:0007669"/>
    <property type="project" value="UniProtKB-KW"/>
</dbReference>
<dbReference type="GO" id="GO:0046718">
    <property type="term" value="P:symbiont entry into host cell"/>
    <property type="evidence" value="ECO:0007669"/>
    <property type="project" value="UniProtKB-KW"/>
</dbReference>
<dbReference type="GO" id="GO:0019062">
    <property type="term" value="P:virion attachment to host cell"/>
    <property type="evidence" value="ECO:0007669"/>
    <property type="project" value="UniProtKB-KW"/>
</dbReference>
<dbReference type="InterPro" id="IPR018154">
    <property type="entry name" value="TLV/ENV_coat_polyprotein"/>
</dbReference>
<dbReference type="PANTHER" id="PTHR10424:SF81">
    <property type="entry name" value="ERVV2 PROTEIN"/>
    <property type="match status" value="1"/>
</dbReference>
<dbReference type="PANTHER" id="PTHR10424">
    <property type="entry name" value="VIRAL ENVELOPE PROTEIN"/>
    <property type="match status" value="1"/>
</dbReference>
<dbReference type="Pfam" id="PF00429">
    <property type="entry name" value="TLV_coat"/>
    <property type="match status" value="1"/>
</dbReference>